<proteinExistence type="evidence at protein level"/>
<evidence type="ECO:0000250" key="1">
    <source>
        <dbReference type="UniProtKB" id="Q99P65"/>
    </source>
</evidence>
<evidence type="ECO:0000250" key="2">
    <source>
        <dbReference type="UniProtKB" id="Q9BZD2"/>
    </source>
</evidence>
<evidence type="ECO:0000255" key="3"/>
<evidence type="ECO:0000256" key="4">
    <source>
        <dbReference type="SAM" id="MobiDB-lite"/>
    </source>
</evidence>
<evidence type="ECO:0000269" key="5">
    <source>
    </source>
</evidence>
<evidence type="ECO:0000303" key="6">
    <source>
    </source>
</evidence>
<evidence type="ECO:0000305" key="7"/>
<evidence type="ECO:0000312" key="8">
    <source>
        <dbReference type="RGD" id="727811"/>
    </source>
</evidence>
<comment type="function">
    <text evidence="1 2">Uniporter that mediates the facilitative transport of nucleoside across lysosomal and mitochondrial membranes. Functions as a non-electrogenic Na(+)-independent transporter. Substrate transport is pH-dependent and enhanced under acidic condition, probably reflecting the location of the transporter in acidic intracellular compartments. Proton is not a cotransporting ion but most likely change the ionization state of the transporter which dictates transport-permissible/impermissible conformation for nucleoside translocation. May direct the nucleoside transport from lysosomes to cytosol or cytosol to mitochondria to facilitate the fundamental function of salvage synthesis of nucleic acids. Involved in the transport of nucleosides (adenosine, guanosine, uridine, thymidine, cytidine and inosine) and deoxynucleosides (deoxyadenosine, deoxycytidine). Also mediates transport of purine nucleobases (adenine, guanine) and pyrimidine nucleobases (uracil). Also able to transport monoamine neurotransmitters dopamine, serotonin, noradrenaline and tyramine. Capable of transporting ATP (By similarity). Mediates nucleoside export from lysosomes in macrophages, which regulates macrophage functions and numbers (By similarity).</text>
</comment>
<comment type="catalytic activity">
    <reaction evidence="2">
        <text>adenosine(in) = adenosine(out)</text>
        <dbReference type="Rhea" id="RHEA:75343"/>
        <dbReference type="ChEBI" id="CHEBI:16335"/>
    </reaction>
</comment>
<comment type="catalytic activity">
    <reaction evidence="2">
        <text>guanosine(in) = guanosine(out)</text>
        <dbReference type="Rhea" id="RHEA:75371"/>
        <dbReference type="ChEBI" id="CHEBI:16750"/>
    </reaction>
</comment>
<comment type="catalytic activity">
    <reaction evidence="2">
        <text>inosine(in) = inosine(out)</text>
        <dbReference type="Rhea" id="RHEA:75375"/>
        <dbReference type="ChEBI" id="CHEBI:17596"/>
    </reaction>
</comment>
<comment type="catalytic activity">
    <reaction evidence="2">
        <text>uridine(out) = uridine(in)</text>
        <dbReference type="Rhea" id="RHEA:71519"/>
        <dbReference type="ChEBI" id="CHEBI:16704"/>
    </reaction>
</comment>
<comment type="catalytic activity">
    <reaction evidence="2">
        <text>cytidine(in) = cytidine(out)</text>
        <dbReference type="Rhea" id="RHEA:75367"/>
        <dbReference type="ChEBI" id="CHEBI:17562"/>
    </reaction>
</comment>
<comment type="catalytic activity">
    <reaction evidence="2">
        <text>thymidine(in) = thymidine(out)</text>
        <dbReference type="Rhea" id="RHEA:75363"/>
        <dbReference type="ChEBI" id="CHEBI:17748"/>
    </reaction>
</comment>
<comment type="catalytic activity">
    <reaction evidence="2">
        <text>2'-deoxyadenosine(in) = 2'-deoxyadenosine(out)</text>
        <dbReference type="Rhea" id="RHEA:75691"/>
        <dbReference type="ChEBI" id="CHEBI:17256"/>
    </reaction>
</comment>
<comment type="catalytic activity">
    <reaction evidence="2">
        <text>2'-deoxycytidine(in) = 2'-deoxycytidine(out)</text>
        <dbReference type="Rhea" id="RHEA:75695"/>
        <dbReference type="ChEBI" id="CHEBI:15698"/>
    </reaction>
</comment>
<comment type="catalytic activity">
    <reaction evidence="2">
        <text>guanine(out) = guanine(in)</text>
        <dbReference type="Rhea" id="RHEA:71531"/>
        <dbReference type="ChEBI" id="CHEBI:16235"/>
    </reaction>
</comment>
<comment type="catalytic activity">
    <reaction evidence="2">
        <text>uracil(in) = uracil(out)</text>
        <dbReference type="Rhea" id="RHEA:69404"/>
        <dbReference type="ChEBI" id="CHEBI:17568"/>
    </reaction>
</comment>
<comment type="catalytic activity">
    <reaction evidence="2">
        <text>(R)-noradrenaline(out) = (R)-noradrenaline(in)</text>
        <dbReference type="Rhea" id="RHEA:73871"/>
        <dbReference type="ChEBI" id="CHEBI:72587"/>
    </reaction>
</comment>
<comment type="catalytic activity">
    <reaction evidence="2">
        <text>dopamine(out) = dopamine(in)</text>
        <dbReference type="Rhea" id="RHEA:73863"/>
        <dbReference type="ChEBI" id="CHEBI:59905"/>
    </reaction>
</comment>
<comment type="catalytic activity">
    <reaction evidence="2">
        <text>serotonin(out) = serotonin(in)</text>
        <dbReference type="Rhea" id="RHEA:73867"/>
        <dbReference type="ChEBI" id="CHEBI:350546"/>
    </reaction>
</comment>
<comment type="catalytic activity">
    <reaction evidence="2">
        <text>tyramine(in) = tyramine(out)</text>
        <dbReference type="Rhea" id="RHEA:74783"/>
        <dbReference type="ChEBI" id="CHEBI:327995"/>
    </reaction>
</comment>
<comment type="catalytic activity">
    <reaction evidence="2">
        <text>ATP(in) = ATP(out)</text>
        <dbReference type="Rhea" id="RHEA:75687"/>
        <dbReference type="ChEBI" id="CHEBI:30616"/>
    </reaction>
</comment>
<comment type="subcellular location">
    <subcellularLocation>
        <location evidence="2">Lysosome membrane</location>
        <topology evidence="7">Multi-pass membrane protein</topology>
    </subcellularLocation>
    <subcellularLocation>
        <location evidence="2">Late endosome membrane</location>
        <topology evidence="7">Multi-pass membrane protein</topology>
    </subcellularLocation>
    <subcellularLocation>
        <location evidence="2">Mitochondrion membrane</location>
        <topology evidence="7">Multi-pass membrane protein</topology>
    </subcellularLocation>
    <subcellularLocation>
        <location evidence="2">Cell membrane</location>
        <topology evidence="7">Multi-pass membrane protein</topology>
    </subcellularLocation>
</comment>
<comment type="tissue specificity">
    <text evidence="5">Widely expressed. Highest levels in heart and liver (at protein level).</text>
</comment>
<comment type="domain">
    <text evidence="2">Contains a N-terminal dileucine motif (DE)XXXL(LI) important for endosomal/lysosomal and mitochondrial subcellular localization.</text>
</comment>
<comment type="similarity">
    <text evidence="7">Belongs to the SLC29A/ENT transporter (TC 2.A.57) family.</text>
</comment>
<reference key="1">
    <citation type="submission" date="2003-04" db="EMBL/GenBank/DDBJ databases">
        <title>Molecular cloning of rat equilibrative nucleoside transporter type 3 isoform.</title>
        <authorList>
            <person name="Toan S.-V."/>
            <person name="Ward J.L."/>
            <person name="Tse C.-M."/>
        </authorList>
    </citation>
    <scope>NUCLEOTIDE SEQUENCE [MRNA]</scope>
    <source>
        <strain>Sprague-Dawley</strain>
        <tissue>Liver</tissue>
    </source>
</reference>
<reference key="2">
    <citation type="journal article" date="2004" name="Genome Res.">
        <title>The status, quality, and expansion of the NIH full-length cDNA project: the Mammalian Gene Collection (MGC).</title>
        <authorList>
            <consortium name="The MGC Project Team"/>
        </authorList>
    </citation>
    <scope>NUCLEOTIDE SEQUENCE [LARGE SCALE MRNA]</scope>
    <source>
        <strain>Brown Norway</strain>
        <tissue>Testis</tissue>
    </source>
</reference>
<reference key="3">
    <citation type="journal article" date="2005" name="J. Biol. Chem.">
        <title>Functional characterization of novel human and mouse equilibrative nucleoside transporters (hENT3 and mENT3) located in intracellular membranes.</title>
        <authorList>
            <person name="Baldwin S.A."/>
            <person name="Yao S.Y.M."/>
            <person name="Hyde R.J."/>
            <person name="Ng A.M.L."/>
            <person name="Foppolo S."/>
            <person name="Barnes K."/>
            <person name="Ritzel M.W.L."/>
            <person name="Cass C.E."/>
            <person name="Young J.D."/>
        </authorList>
    </citation>
    <scope>TISSUE SPECIFICITY</scope>
</reference>
<reference key="4">
    <citation type="journal article" date="2012" name="Nat. Commun.">
        <title>Quantitative maps of protein phosphorylation sites across 14 different rat organs and tissues.</title>
        <authorList>
            <person name="Lundby A."/>
            <person name="Secher A."/>
            <person name="Lage K."/>
            <person name="Nordsborg N.B."/>
            <person name="Dmytriyev A."/>
            <person name="Lundby C."/>
            <person name="Olsen J.V."/>
        </authorList>
    </citation>
    <scope>IDENTIFICATION BY MASS SPECTROMETRY [LARGE SCALE ANALYSIS]</scope>
</reference>
<dbReference type="EMBL" id="AY273196">
    <property type="protein sequence ID" value="AAP23232.1"/>
    <property type="molecule type" value="mRNA"/>
</dbReference>
<dbReference type="EMBL" id="BC078678">
    <property type="protein sequence ID" value="AAH78678.1"/>
    <property type="molecule type" value="mRNA"/>
</dbReference>
<dbReference type="RefSeq" id="NP_853670.2">
    <property type="nucleotide sequence ID" value="NM_181639.3"/>
</dbReference>
<dbReference type="SMR" id="Q80WK7"/>
<dbReference type="FunCoup" id="Q80WK7">
    <property type="interactions" value="137"/>
</dbReference>
<dbReference type="STRING" id="10116.ENSRNOP00000000689"/>
<dbReference type="GlyCosmos" id="Q80WK7">
    <property type="glycosylation" value="1 site, No reported glycans"/>
</dbReference>
<dbReference type="GlyGen" id="Q80WK7">
    <property type="glycosylation" value="1 site"/>
</dbReference>
<dbReference type="iPTMnet" id="Q80WK7"/>
<dbReference type="PhosphoSitePlus" id="Q80WK7"/>
<dbReference type="PaxDb" id="10116-ENSRNOP00000000689"/>
<dbReference type="Ensembl" id="ENSRNOT00000113968.1">
    <property type="protein sequence ID" value="ENSRNOP00000082643.1"/>
    <property type="gene ID" value="ENSRNOG00000000568.6"/>
</dbReference>
<dbReference type="GeneID" id="353307"/>
<dbReference type="KEGG" id="rno:353307"/>
<dbReference type="UCSC" id="RGD:727811">
    <property type="organism name" value="rat"/>
</dbReference>
<dbReference type="AGR" id="RGD:727811"/>
<dbReference type="CTD" id="55315"/>
<dbReference type="RGD" id="727811">
    <property type="gene designation" value="Slc29a3"/>
</dbReference>
<dbReference type="eggNOG" id="KOG1479">
    <property type="taxonomic scope" value="Eukaryota"/>
</dbReference>
<dbReference type="GeneTree" id="ENSGT00950000182898"/>
<dbReference type="HOGENOM" id="CLU_021611_6_1_1"/>
<dbReference type="InParanoid" id="Q80WK7"/>
<dbReference type="OrthoDB" id="1856718at2759"/>
<dbReference type="PhylomeDB" id="Q80WK7"/>
<dbReference type="Reactome" id="R-RNO-83936">
    <property type="pathway name" value="Transport of nucleosides and free purine and pyrimidine bases across the plasma membrane"/>
</dbReference>
<dbReference type="Reactome" id="R-RNO-9755088">
    <property type="pathway name" value="Ribavirin ADME"/>
</dbReference>
<dbReference type="PRO" id="PR:Q80WK7"/>
<dbReference type="Proteomes" id="UP000002494">
    <property type="component" value="Chromosome 20"/>
</dbReference>
<dbReference type="Bgee" id="ENSRNOG00000000568">
    <property type="expression patterns" value="Expressed in adult mammalian kidney and 19 other cell types or tissues"/>
</dbReference>
<dbReference type="GO" id="GO:0005794">
    <property type="term" value="C:Golgi apparatus"/>
    <property type="evidence" value="ECO:0000318"/>
    <property type="project" value="GO_Central"/>
</dbReference>
<dbReference type="GO" id="GO:0031902">
    <property type="term" value="C:late endosome membrane"/>
    <property type="evidence" value="ECO:0000250"/>
    <property type="project" value="UniProtKB"/>
</dbReference>
<dbReference type="GO" id="GO:0005765">
    <property type="term" value="C:lysosomal membrane"/>
    <property type="evidence" value="ECO:0000250"/>
    <property type="project" value="UniProtKB"/>
</dbReference>
<dbReference type="GO" id="GO:0031966">
    <property type="term" value="C:mitochondrial membrane"/>
    <property type="evidence" value="ECO:0007669"/>
    <property type="project" value="UniProtKB-SubCell"/>
</dbReference>
<dbReference type="GO" id="GO:0005886">
    <property type="term" value="C:plasma membrane"/>
    <property type="evidence" value="ECO:0000318"/>
    <property type="project" value="GO_Central"/>
</dbReference>
<dbReference type="GO" id="GO:0015212">
    <property type="term" value="F:cytidine transmembrane transporter activity"/>
    <property type="evidence" value="ECO:0000250"/>
    <property type="project" value="UniProtKB"/>
</dbReference>
<dbReference type="GO" id="GO:0015208">
    <property type="term" value="F:guanine transmembrane transporter activity"/>
    <property type="evidence" value="ECO:0000250"/>
    <property type="project" value="UniProtKB"/>
</dbReference>
<dbReference type="GO" id="GO:0008504">
    <property type="term" value="F:monoamine transmembrane transporter activity"/>
    <property type="evidence" value="ECO:0000250"/>
    <property type="project" value="UniProtKB"/>
</dbReference>
<dbReference type="GO" id="GO:0005326">
    <property type="term" value="F:neurotransmitter transmembrane transporter activity"/>
    <property type="evidence" value="ECO:0000250"/>
    <property type="project" value="UniProtKB"/>
</dbReference>
<dbReference type="GO" id="GO:0015205">
    <property type="term" value="F:nucleobase transmembrane transporter activity"/>
    <property type="evidence" value="ECO:0000250"/>
    <property type="project" value="UniProtKB"/>
</dbReference>
<dbReference type="GO" id="GO:0005337">
    <property type="term" value="F:nucleoside transmembrane transporter activity"/>
    <property type="evidence" value="ECO:0000315"/>
    <property type="project" value="RGD"/>
</dbReference>
<dbReference type="GO" id="GO:0015101">
    <property type="term" value="F:organic cation transmembrane transporter activity"/>
    <property type="evidence" value="ECO:0000250"/>
    <property type="project" value="UniProtKB"/>
</dbReference>
<dbReference type="GO" id="GO:0015210">
    <property type="term" value="F:uracil transmembrane transporter activity"/>
    <property type="evidence" value="ECO:0000250"/>
    <property type="project" value="UniProtKB"/>
</dbReference>
<dbReference type="GO" id="GO:0015213">
    <property type="term" value="F:uridine transmembrane transporter activity"/>
    <property type="evidence" value="ECO:0000250"/>
    <property type="project" value="UniProtKB"/>
</dbReference>
<dbReference type="GO" id="GO:0032238">
    <property type="term" value="P:adenosine transport"/>
    <property type="evidence" value="ECO:0000250"/>
    <property type="project" value="UniProtKB"/>
</dbReference>
<dbReference type="GO" id="GO:0015861">
    <property type="term" value="P:cytidine transport"/>
    <property type="evidence" value="ECO:0000250"/>
    <property type="project" value="UniProtKB"/>
</dbReference>
<dbReference type="GO" id="GO:0015872">
    <property type="term" value="P:dopamine transport"/>
    <property type="evidence" value="ECO:0000250"/>
    <property type="project" value="UniProtKB"/>
</dbReference>
<dbReference type="GO" id="GO:1903716">
    <property type="term" value="P:guanine transmembrane transport"/>
    <property type="evidence" value="ECO:0000250"/>
    <property type="project" value="UniProtKB"/>
</dbReference>
<dbReference type="GO" id="GO:0035340">
    <property type="term" value="P:inosine transport"/>
    <property type="evidence" value="ECO:0000250"/>
    <property type="project" value="UniProtKB"/>
</dbReference>
<dbReference type="GO" id="GO:0015874">
    <property type="term" value="P:norepinephrine transport"/>
    <property type="evidence" value="ECO:0000250"/>
    <property type="project" value="UniProtKB"/>
</dbReference>
<dbReference type="GO" id="GO:0015851">
    <property type="term" value="P:nucleobase transport"/>
    <property type="evidence" value="ECO:0000250"/>
    <property type="project" value="UniProtKB"/>
</dbReference>
<dbReference type="GO" id="GO:1901642">
    <property type="term" value="P:nucleoside transmembrane transport"/>
    <property type="evidence" value="ECO:0000250"/>
    <property type="project" value="UniProtKB"/>
</dbReference>
<dbReference type="GO" id="GO:0015858">
    <property type="term" value="P:nucleoside transport"/>
    <property type="evidence" value="ECO:0000315"/>
    <property type="project" value="RGD"/>
</dbReference>
<dbReference type="GO" id="GO:1904823">
    <property type="term" value="P:purine nucleobase transmembrane transport"/>
    <property type="evidence" value="ECO:0000250"/>
    <property type="project" value="UniProtKB"/>
</dbReference>
<dbReference type="GO" id="GO:1904082">
    <property type="term" value="P:pyrimidine nucleobase transmembrane transport"/>
    <property type="evidence" value="ECO:0000250"/>
    <property type="project" value="UniProtKB"/>
</dbReference>
<dbReference type="GO" id="GO:0006837">
    <property type="term" value="P:serotonin transport"/>
    <property type="evidence" value="ECO:0000250"/>
    <property type="project" value="UniProtKB"/>
</dbReference>
<dbReference type="GO" id="GO:1903791">
    <property type="term" value="P:uracil transmembrane transport"/>
    <property type="evidence" value="ECO:0000250"/>
    <property type="project" value="UniProtKB"/>
</dbReference>
<dbReference type="GO" id="GO:0015862">
    <property type="term" value="P:uridine transmembrane transport"/>
    <property type="evidence" value="ECO:0000250"/>
    <property type="project" value="UniProtKB"/>
</dbReference>
<dbReference type="InterPro" id="IPR002259">
    <property type="entry name" value="Eqnu_transpt"/>
</dbReference>
<dbReference type="PANTHER" id="PTHR10332">
    <property type="entry name" value="EQUILIBRATIVE NUCLEOSIDE TRANSPORTER"/>
    <property type="match status" value="1"/>
</dbReference>
<dbReference type="PANTHER" id="PTHR10332:SF17">
    <property type="entry name" value="EQUILIBRATIVE NUCLEOSIDE TRANSPORTER 3"/>
    <property type="match status" value="1"/>
</dbReference>
<dbReference type="Pfam" id="PF01733">
    <property type="entry name" value="Nucleoside_tran"/>
    <property type="match status" value="1"/>
</dbReference>
<dbReference type="PIRSF" id="PIRSF016379">
    <property type="entry name" value="ENT"/>
    <property type="match status" value="1"/>
</dbReference>
<dbReference type="PRINTS" id="PR01130">
    <property type="entry name" value="DERENTRNSPRT"/>
</dbReference>
<keyword id="KW-1003">Cell membrane</keyword>
<keyword id="KW-0967">Endosome</keyword>
<keyword id="KW-0325">Glycoprotein</keyword>
<keyword id="KW-0458">Lysosome</keyword>
<keyword id="KW-0472">Membrane</keyword>
<keyword id="KW-0496">Mitochondrion</keyword>
<keyword id="KW-0597">Phosphoprotein</keyword>
<keyword id="KW-1185">Reference proteome</keyword>
<keyword id="KW-0812">Transmembrane</keyword>
<keyword id="KW-1133">Transmembrane helix</keyword>
<keyword id="KW-0813">Transport</keyword>
<name>S29A3_RAT</name>
<accession>Q80WK7</accession>
<accession>Q6AZ86</accession>
<organism>
    <name type="scientific">Rattus norvegicus</name>
    <name type="common">Rat</name>
    <dbReference type="NCBI Taxonomy" id="10116"/>
    <lineage>
        <taxon>Eukaryota</taxon>
        <taxon>Metazoa</taxon>
        <taxon>Chordata</taxon>
        <taxon>Craniata</taxon>
        <taxon>Vertebrata</taxon>
        <taxon>Euteleostomi</taxon>
        <taxon>Mammalia</taxon>
        <taxon>Eutheria</taxon>
        <taxon>Euarchontoglires</taxon>
        <taxon>Glires</taxon>
        <taxon>Rodentia</taxon>
        <taxon>Myomorpha</taxon>
        <taxon>Muroidea</taxon>
        <taxon>Muridae</taxon>
        <taxon>Murinae</taxon>
        <taxon>Rattus</taxon>
    </lineage>
</organism>
<feature type="chain" id="PRO_0000209345" description="Equilibrative nucleoside transporter 3">
    <location>
        <begin position="1"/>
        <end position="475"/>
    </location>
</feature>
<feature type="topological domain" description="Cytoplasmic" evidence="3">
    <location>
        <begin position="1"/>
        <end position="51"/>
    </location>
</feature>
<feature type="transmembrane region" description="Helical" evidence="3">
    <location>
        <begin position="52"/>
        <end position="72"/>
    </location>
</feature>
<feature type="topological domain" description="Extracellular" evidence="3">
    <location>
        <begin position="73"/>
        <end position="105"/>
    </location>
</feature>
<feature type="transmembrane region" description="Helical" evidence="3">
    <location>
        <begin position="106"/>
        <end position="126"/>
    </location>
</feature>
<feature type="topological domain" description="Cytoplasmic" evidence="3">
    <location>
        <begin position="127"/>
        <end position="132"/>
    </location>
</feature>
<feature type="transmembrane region" description="Helical" evidence="3">
    <location>
        <begin position="133"/>
        <end position="153"/>
    </location>
</feature>
<feature type="topological domain" description="Extracellular" evidence="3">
    <location>
        <begin position="154"/>
        <end position="162"/>
    </location>
</feature>
<feature type="transmembrane region" description="Helical" evidence="3">
    <location>
        <begin position="163"/>
        <end position="183"/>
    </location>
</feature>
<feature type="topological domain" description="Cytoplasmic" evidence="3">
    <location>
        <begin position="184"/>
        <end position="199"/>
    </location>
</feature>
<feature type="transmembrane region" description="Helical" evidence="3">
    <location>
        <begin position="200"/>
        <end position="220"/>
    </location>
</feature>
<feature type="topological domain" description="Extracellular" evidence="3">
    <location>
        <begin position="221"/>
        <end position="230"/>
    </location>
</feature>
<feature type="transmembrane region" description="Helical" evidence="3">
    <location>
        <begin position="231"/>
        <end position="251"/>
    </location>
</feature>
<feature type="topological domain" description="Cytoplasmic" evidence="3">
    <location>
        <begin position="252"/>
        <end position="305"/>
    </location>
</feature>
<feature type="transmembrane region" description="Helical" evidence="3">
    <location>
        <begin position="306"/>
        <end position="326"/>
    </location>
</feature>
<feature type="topological domain" description="Extracellular" evidence="3">
    <location>
        <begin position="327"/>
        <end position="340"/>
    </location>
</feature>
<feature type="transmembrane region" description="Helical" evidence="3">
    <location>
        <begin position="341"/>
        <end position="361"/>
    </location>
</feature>
<feature type="topological domain" description="Cytoplasmic" evidence="3">
    <location>
        <begin position="362"/>
        <end position="377"/>
    </location>
</feature>
<feature type="transmembrane region" description="Helical" evidence="3">
    <location>
        <begin position="378"/>
        <end position="398"/>
    </location>
</feature>
<feature type="topological domain" description="Extracellular" evidence="3">
    <location>
        <begin position="399"/>
        <end position="414"/>
    </location>
</feature>
<feature type="transmembrane region" description="Helical" evidence="3">
    <location>
        <begin position="415"/>
        <end position="437"/>
    </location>
</feature>
<feature type="topological domain" description="Cytoplasmic" evidence="3">
    <location>
        <begin position="438"/>
        <end position="450"/>
    </location>
</feature>
<feature type="transmembrane region" description="Helical" evidence="3">
    <location>
        <begin position="451"/>
        <end position="471"/>
    </location>
</feature>
<feature type="topological domain" description="Extracellular" evidence="3">
    <location>
        <begin position="472"/>
        <end position="475"/>
    </location>
</feature>
<feature type="region of interest" description="Disordered" evidence="4">
    <location>
        <begin position="272"/>
        <end position="291"/>
    </location>
</feature>
<feature type="short sequence motif" description="Dileucine internalization motif" evidence="2">
    <location>
        <begin position="31"/>
        <end position="32"/>
    </location>
</feature>
<feature type="site" description="Important for acidic pH-dependent nucleoside transporter activity. Acts as a pH sensor" evidence="2">
    <location>
        <position position="219"/>
    </location>
</feature>
<feature type="site" description="Important for acidic pH-dependent nucleoside transporter activity. Acts as a pH sensor" evidence="2">
    <location>
        <position position="447"/>
    </location>
</feature>
<feature type="modified residue" description="Phosphoserine" evidence="1">
    <location>
        <position position="21"/>
    </location>
</feature>
<feature type="glycosylation site" description="N-linked (GlcNAc...) asparagine" evidence="3">
    <location>
        <position position="84"/>
    </location>
</feature>
<feature type="sequence conflict" description="In Ref. 1; AAP23232." evidence="7" ref="1">
    <original>S</original>
    <variation>P</variation>
    <location>
        <position position="142"/>
    </location>
</feature>
<sequence length="475" mass="51677">MAFASEDIAYHSSNAVYRVPSNRHEADQEALLGKPLDYPAPGLQRPEDRFNGAYIIFFCLGIGGLLPWNFFVTAKEYWAFKLRNCSSPASGKDPEDADILNYFESYLAVASTVPSLLFLVANFLLVNRIRVHVRVLASLSVSLAIFVVMAVLVRVDTSSWTRGFFSIAMACMAIISSSSTIFNSSVYGLTGSFPMRNAQALISGGAMGGTVSAVASLVDLAASSDVRDSALAFFLTAAVFLGLCVGLYLLLPQLEYARYYMRPVVPIHVFSSEDSPPRDAPSTSSVAPASRAVHTPPLGPILKKTAGLGFCAVFLYFITALIFPAISTNIQPMHKGTGSPWTSKFYVPLTVFLLFNFADLCGRQVTAWIQVPGPRSKLLPILAVSRVCLVPLFLLCNYQPRSHLTLVLFQSDIYPILFTCLLGLSNGYLSTLVLMYGPKIVPRELAEATSVVMLFYMSLGLMLGSACAALLEHFI</sequence>
<gene>
    <name evidence="8" type="primary">Slc29a3</name>
    <name type="synonym">Ent3</name>
</gene>
<protein>
    <recommendedName>
        <fullName evidence="6">Equilibrative nucleoside transporter 3</fullName>
        <shortName evidence="6">rENT3</shortName>
    </recommendedName>
    <alternativeName>
        <fullName evidence="2">Solute carrier family 29 member 3</fullName>
    </alternativeName>
</protein>